<dbReference type="EC" id="3.1.26.5" evidence="1"/>
<dbReference type="EMBL" id="AY256341">
    <property type="protein sequence ID" value="AAO88975.1"/>
    <property type="molecule type" value="Genomic_DNA"/>
</dbReference>
<dbReference type="SMR" id="Q7X5K8"/>
<dbReference type="GO" id="GO:0030677">
    <property type="term" value="C:ribonuclease P complex"/>
    <property type="evidence" value="ECO:0007669"/>
    <property type="project" value="TreeGrafter"/>
</dbReference>
<dbReference type="GO" id="GO:0042781">
    <property type="term" value="F:3'-tRNA processing endoribonuclease activity"/>
    <property type="evidence" value="ECO:0007669"/>
    <property type="project" value="TreeGrafter"/>
</dbReference>
<dbReference type="GO" id="GO:0004526">
    <property type="term" value="F:ribonuclease P activity"/>
    <property type="evidence" value="ECO:0007669"/>
    <property type="project" value="UniProtKB-UniRule"/>
</dbReference>
<dbReference type="GO" id="GO:0000049">
    <property type="term" value="F:tRNA binding"/>
    <property type="evidence" value="ECO:0007669"/>
    <property type="project" value="UniProtKB-UniRule"/>
</dbReference>
<dbReference type="GO" id="GO:0001682">
    <property type="term" value="P:tRNA 5'-leader removal"/>
    <property type="evidence" value="ECO:0007669"/>
    <property type="project" value="UniProtKB-UniRule"/>
</dbReference>
<dbReference type="Gene3D" id="3.30.230.10">
    <property type="match status" value="1"/>
</dbReference>
<dbReference type="HAMAP" id="MF_00227">
    <property type="entry name" value="RNase_P"/>
    <property type="match status" value="1"/>
</dbReference>
<dbReference type="InterPro" id="IPR020568">
    <property type="entry name" value="Ribosomal_Su5_D2-typ_SF"/>
</dbReference>
<dbReference type="InterPro" id="IPR014721">
    <property type="entry name" value="Ribsml_uS5_D2-typ_fold_subgr"/>
</dbReference>
<dbReference type="InterPro" id="IPR000100">
    <property type="entry name" value="RNase_P"/>
</dbReference>
<dbReference type="InterPro" id="IPR020539">
    <property type="entry name" value="RNase_P_CS"/>
</dbReference>
<dbReference type="NCBIfam" id="TIGR00188">
    <property type="entry name" value="rnpA"/>
    <property type="match status" value="1"/>
</dbReference>
<dbReference type="PANTHER" id="PTHR33992">
    <property type="entry name" value="RIBONUCLEASE P PROTEIN COMPONENT"/>
    <property type="match status" value="1"/>
</dbReference>
<dbReference type="PANTHER" id="PTHR33992:SF1">
    <property type="entry name" value="RIBONUCLEASE P PROTEIN COMPONENT"/>
    <property type="match status" value="1"/>
</dbReference>
<dbReference type="Pfam" id="PF00825">
    <property type="entry name" value="Ribonuclease_P"/>
    <property type="match status" value="1"/>
</dbReference>
<dbReference type="SUPFAM" id="SSF54211">
    <property type="entry name" value="Ribosomal protein S5 domain 2-like"/>
    <property type="match status" value="1"/>
</dbReference>
<dbReference type="PROSITE" id="PS00648">
    <property type="entry name" value="RIBONUCLEASE_P"/>
    <property type="match status" value="1"/>
</dbReference>
<name>RNPA_THESC</name>
<protein>
    <recommendedName>
        <fullName evidence="1">Ribonuclease P protein component</fullName>
        <shortName evidence="1">RNase P protein</shortName>
        <shortName evidence="1">RNaseP protein</shortName>
        <ecNumber evidence="1">3.1.26.5</ecNumber>
    </recommendedName>
    <alternativeName>
        <fullName evidence="1">Protein C5</fullName>
    </alternativeName>
</protein>
<organism>
    <name type="scientific">Thermus scotoductus</name>
    <dbReference type="NCBI Taxonomy" id="37636"/>
    <lineage>
        <taxon>Bacteria</taxon>
        <taxon>Thermotogati</taxon>
        <taxon>Deinococcota</taxon>
        <taxon>Deinococci</taxon>
        <taxon>Thermales</taxon>
        <taxon>Thermaceae</taxon>
        <taxon>Thermus</taxon>
    </lineage>
</organism>
<accession>Q7X5K8</accession>
<keyword id="KW-0255">Endonuclease</keyword>
<keyword id="KW-0378">Hydrolase</keyword>
<keyword id="KW-0540">Nuclease</keyword>
<keyword id="KW-0694">RNA-binding</keyword>
<keyword id="KW-0819">tRNA processing</keyword>
<sequence>MDEKDLATQPEEAGQDPRLPGPHEDPRRQEGVEAEKAEGPLAPHPQGERLSQPPPAAGGKLLSLKGDRAFQRLRQGRMGRGRFLNVKWLPASELRVGIVVSKKVGKAVVRNRIKRRLREILRRLHLPKAHLLVIASPEAREATYAELFQDLIRALKKSGLIQ</sequence>
<gene>
    <name evidence="1" type="primary">rnpA</name>
</gene>
<reference key="1">
    <citation type="journal article" date="2003" name="Proc. Natl. Acad. Sci. U.S.A.">
        <title>An unusual mechanism of bacterial gene expression revealed for the RNase P protein of Thermus strains.</title>
        <authorList>
            <person name="Feltens R."/>
            <person name="Gossringer M."/>
            <person name="Willkomm D.K."/>
            <person name="Urlaub H."/>
            <person name="Hartmann R.K."/>
        </authorList>
    </citation>
    <scope>NUCLEOTIDE SEQUENCE [GENOMIC DNA]</scope>
    <source>
        <strain>Vi4A</strain>
    </source>
</reference>
<evidence type="ECO:0000255" key="1">
    <source>
        <dbReference type="HAMAP-Rule" id="MF_00227"/>
    </source>
</evidence>
<evidence type="ECO:0000256" key="2">
    <source>
        <dbReference type="SAM" id="MobiDB-lite"/>
    </source>
</evidence>
<feature type="chain" id="PRO_0000198557" description="Ribonuclease P protein component">
    <location>
        <begin position="1"/>
        <end position="162"/>
    </location>
</feature>
<feature type="region of interest" description="Disordered" evidence="2">
    <location>
        <begin position="1"/>
        <end position="63"/>
    </location>
</feature>
<feature type="compositionally biased region" description="Basic and acidic residues" evidence="2">
    <location>
        <begin position="21"/>
        <end position="38"/>
    </location>
</feature>
<proteinExistence type="inferred from homology"/>
<comment type="function">
    <text evidence="1">RNaseP catalyzes the removal of the 5'-leader sequence from pre-tRNA to produce the mature 5'-terminus. It can also cleave other RNA substrates such as 4.5S RNA. The protein component plays an auxiliary but essential role in vivo by binding to the 5'-leader sequence and broadening the substrate specificity of the ribozyme.</text>
</comment>
<comment type="catalytic activity">
    <reaction evidence="1">
        <text>Endonucleolytic cleavage of RNA, removing 5'-extranucleotides from tRNA precursor.</text>
        <dbReference type="EC" id="3.1.26.5"/>
    </reaction>
</comment>
<comment type="subunit">
    <text evidence="1">Consists of a catalytic RNA component (M1 or rnpB) and a protein subunit.</text>
</comment>
<comment type="miscellaneous">
    <text>The open reading frame (ORF) for this protein entirely encompasses the ORF for the 50S ribosomal protein L34 (rpmH). The two start codons are separated by four nucleotides.</text>
</comment>
<comment type="similarity">
    <text evidence="1">Belongs to the RnpA family.</text>
</comment>